<name>PDXA_HELPG</name>
<feature type="chain" id="PRO_1000128252" description="4-hydroxythreonine-4-phosphate dehydrogenase">
    <location>
        <begin position="1"/>
        <end position="307"/>
    </location>
</feature>
<feature type="binding site" evidence="1">
    <location>
        <position position="126"/>
    </location>
    <ligand>
        <name>substrate</name>
    </ligand>
</feature>
<feature type="binding site" evidence="1">
    <location>
        <position position="127"/>
    </location>
    <ligand>
        <name>substrate</name>
    </ligand>
</feature>
<feature type="binding site" evidence="1">
    <location>
        <position position="156"/>
    </location>
    <ligand>
        <name>a divalent metal cation</name>
        <dbReference type="ChEBI" id="CHEBI:60240"/>
        <note>ligand shared between dimeric partners</note>
    </ligand>
</feature>
<feature type="binding site" evidence="1">
    <location>
        <position position="195"/>
    </location>
    <ligand>
        <name>a divalent metal cation</name>
        <dbReference type="ChEBI" id="CHEBI:60240"/>
        <note>ligand shared between dimeric partners</note>
    </ligand>
</feature>
<feature type="binding site" evidence="1">
    <location>
        <position position="251"/>
    </location>
    <ligand>
        <name>a divalent metal cation</name>
        <dbReference type="ChEBI" id="CHEBI:60240"/>
        <note>ligand shared between dimeric partners</note>
    </ligand>
</feature>
<feature type="binding site" evidence="1">
    <location>
        <position position="259"/>
    </location>
    <ligand>
        <name>substrate</name>
    </ligand>
</feature>
<feature type="binding site" evidence="1">
    <location>
        <position position="268"/>
    </location>
    <ligand>
        <name>substrate</name>
    </ligand>
</feature>
<feature type="binding site" evidence="1">
    <location>
        <position position="277"/>
    </location>
    <ligand>
        <name>substrate</name>
    </ligand>
</feature>
<dbReference type="EC" id="1.1.1.262" evidence="1"/>
<dbReference type="EMBL" id="CP001173">
    <property type="protein sequence ID" value="ACI28262.1"/>
    <property type="molecule type" value="Genomic_DNA"/>
</dbReference>
<dbReference type="RefSeq" id="WP_001074972.1">
    <property type="nucleotide sequence ID" value="NC_011333.1"/>
</dbReference>
<dbReference type="SMR" id="B5Z9L3"/>
<dbReference type="KEGG" id="hpg:HPG27_1520"/>
<dbReference type="HOGENOM" id="CLU_040168_0_0_7"/>
<dbReference type="UniPathway" id="UPA00244">
    <property type="reaction ID" value="UER00312"/>
</dbReference>
<dbReference type="Proteomes" id="UP000001735">
    <property type="component" value="Chromosome"/>
</dbReference>
<dbReference type="GO" id="GO:0005737">
    <property type="term" value="C:cytoplasm"/>
    <property type="evidence" value="ECO:0007669"/>
    <property type="project" value="UniProtKB-SubCell"/>
</dbReference>
<dbReference type="GO" id="GO:0050570">
    <property type="term" value="F:4-hydroxythreonine-4-phosphate dehydrogenase activity"/>
    <property type="evidence" value="ECO:0007669"/>
    <property type="project" value="UniProtKB-UniRule"/>
</dbReference>
<dbReference type="GO" id="GO:0050897">
    <property type="term" value="F:cobalt ion binding"/>
    <property type="evidence" value="ECO:0007669"/>
    <property type="project" value="UniProtKB-UniRule"/>
</dbReference>
<dbReference type="GO" id="GO:0000287">
    <property type="term" value="F:magnesium ion binding"/>
    <property type="evidence" value="ECO:0007669"/>
    <property type="project" value="UniProtKB-UniRule"/>
</dbReference>
<dbReference type="GO" id="GO:0051287">
    <property type="term" value="F:NAD binding"/>
    <property type="evidence" value="ECO:0007669"/>
    <property type="project" value="InterPro"/>
</dbReference>
<dbReference type="GO" id="GO:0008270">
    <property type="term" value="F:zinc ion binding"/>
    <property type="evidence" value="ECO:0007669"/>
    <property type="project" value="UniProtKB-UniRule"/>
</dbReference>
<dbReference type="GO" id="GO:0042823">
    <property type="term" value="P:pyridoxal phosphate biosynthetic process"/>
    <property type="evidence" value="ECO:0007669"/>
    <property type="project" value="UniProtKB-UniRule"/>
</dbReference>
<dbReference type="GO" id="GO:0008615">
    <property type="term" value="P:pyridoxine biosynthetic process"/>
    <property type="evidence" value="ECO:0007669"/>
    <property type="project" value="UniProtKB-UniRule"/>
</dbReference>
<dbReference type="Gene3D" id="3.40.718.10">
    <property type="entry name" value="Isopropylmalate Dehydrogenase"/>
    <property type="match status" value="1"/>
</dbReference>
<dbReference type="HAMAP" id="MF_02086">
    <property type="entry name" value="PdxA_Epsilonprot"/>
    <property type="match status" value="1"/>
</dbReference>
<dbReference type="InterPro" id="IPR037539">
    <property type="entry name" value="PdxA_epsilonprot"/>
</dbReference>
<dbReference type="InterPro" id="IPR005255">
    <property type="entry name" value="PdxA_fam"/>
</dbReference>
<dbReference type="NCBIfam" id="TIGR00557">
    <property type="entry name" value="pdxA"/>
    <property type="match status" value="1"/>
</dbReference>
<dbReference type="NCBIfam" id="NF003040">
    <property type="entry name" value="PRK03946.1"/>
    <property type="match status" value="1"/>
</dbReference>
<dbReference type="PANTHER" id="PTHR30004">
    <property type="entry name" value="4-HYDROXYTHREONINE-4-PHOSPHATE DEHYDROGENASE"/>
    <property type="match status" value="1"/>
</dbReference>
<dbReference type="PANTHER" id="PTHR30004:SF6">
    <property type="entry name" value="D-THREONATE 4-PHOSPHATE DEHYDROGENASE"/>
    <property type="match status" value="1"/>
</dbReference>
<dbReference type="Pfam" id="PF04166">
    <property type="entry name" value="PdxA"/>
    <property type="match status" value="1"/>
</dbReference>
<dbReference type="SUPFAM" id="SSF53659">
    <property type="entry name" value="Isocitrate/Isopropylmalate dehydrogenase-like"/>
    <property type="match status" value="1"/>
</dbReference>
<evidence type="ECO:0000255" key="1">
    <source>
        <dbReference type="HAMAP-Rule" id="MF_02086"/>
    </source>
</evidence>
<gene>
    <name evidence="1" type="primary">pdxA</name>
    <name type="ordered locus">HPG27_1520</name>
</gene>
<sequence length="307" mass="33734">MAKKKIAISCGDIQGVGLELILKSHKEVNAFCEPLYLIDGELLERANQLLHNAYETKTLNTLAIHSPLPLLNSSTIGKVSAQSGAYSFESFKKACELADSKEVDGICTLPINKLAWQQAQIPFVGHTDFLKQRYKDHQIIMMLGCSKLFVGLFSDHVPLGAVSQLIQVKALVKFLLAFQKSTQAKIVQVCGFNPHAGEEGLFGKEDEKILKAIQKSNQTLGFECFLGPLPADSAFAPNKRQITPFYVSMSHDVGLAPLKALYFDESINVSLNAPILRASTDHGTAFDIAYQNKANNKSYLNAIKYLA</sequence>
<protein>
    <recommendedName>
        <fullName evidence="1">4-hydroxythreonine-4-phosphate dehydrogenase</fullName>
        <ecNumber evidence="1">1.1.1.262</ecNumber>
    </recommendedName>
    <alternativeName>
        <fullName evidence="1">4-(phosphohydroxy)-L-threonine dehydrogenase</fullName>
    </alternativeName>
</protein>
<organism>
    <name type="scientific">Helicobacter pylori (strain G27)</name>
    <dbReference type="NCBI Taxonomy" id="563041"/>
    <lineage>
        <taxon>Bacteria</taxon>
        <taxon>Pseudomonadati</taxon>
        <taxon>Campylobacterota</taxon>
        <taxon>Epsilonproteobacteria</taxon>
        <taxon>Campylobacterales</taxon>
        <taxon>Helicobacteraceae</taxon>
        <taxon>Helicobacter</taxon>
    </lineage>
</organism>
<proteinExistence type="inferred from homology"/>
<keyword id="KW-0170">Cobalt</keyword>
<keyword id="KW-0963">Cytoplasm</keyword>
<keyword id="KW-0460">Magnesium</keyword>
<keyword id="KW-0479">Metal-binding</keyword>
<keyword id="KW-0520">NAD</keyword>
<keyword id="KW-0521">NADP</keyword>
<keyword id="KW-0560">Oxidoreductase</keyword>
<keyword id="KW-0664">Pyridoxine biosynthesis</keyword>
<keyword id="KW-1185">Reference proteome</keyword>
<keyword id="KW-0862">Zinc</keyword>
<accession>B5Z9L3</accession>
<reference key="1">
    <citation type="journal article" date="2009" name="J. Bacteriol.">
        <title>The complete genome sequence of Helicobacter pylori strain G27.</title>
        <authorList>
            <person name="Baltrus D.A."/>
            <person name="Amieva M.R."/>
            <person name="Covacci A."/>
            <person name="Lowe T.M."/>
            <person name="Merrell D.S."/>
            <person name="Ottemann K.M."/>
            <person name="Stein M."/>
            <person name="Salama N.R."/>
            <person name="Guillemin K."/>
        </authorList>
    </citation>
    <scope>NUCLEOTIDE SEQUENCE [LARGE SCALE GENOMIC DNA]</scope>
    <source>
        <strain>G27</strain>
    </source>
</reference>
<comment type="function">
    <text evidence="1">Catalyzes the NAD(P)-dependent oxidation of 4-(phosphooxy)-L-threonine (HTP) into 2-amino-3-oxo-4-(phosphooxy)butyric acid which spontaneously decarboxylates to form 3-amino-2-oxopropyl phosphate (AHAP).</text>
</comment>
<comment type="catalytic activity">
    <reaction evidence="1">
        <text>4-(phosphooxy)-L-threonine + NAD(+) = 3-amino-2-oxopropyl phosphate + CO2 + NADH</text>
        <dbReference type="Rhea" id="RHEA:32275"/>
        <dbReference type="ChEBI" id="CHEBI:16526"/>
        <dbReference type="ChEBI" id="CHEBI:57279"/>
        <dbReference type="ChEBI" id="CHEBI:57540"/>
        <dbReference type="ChEBI" id="CHEBI:57945"/>
        <dbReference type="ChEBI" id="CHEBI:58452"/>
        <dbReference type="EC" id="1.1.1.262"/>
    </reaction>
</comment>
<comment type="cofactor">
    <cofactor evidence="1">
        <name>Zn(2+)</name>
        <dbReference type="ChEBI" id="CHEBI:29105"/>
    </cofactor>
    <cofactor evidence="1">
        <name>Mg(2+)</name>
        <dbReference type="ChEBI" id="CHEBI:18420"/>
    </cofactor>
    <cofactor evidence="1">
        <name>Co(2+)</name>
        <dbReference type="ChEBI" id="CHEBI:48828"/>
    </cofactor>
</comment>
<comment type="pathway">
    <text evidence="1">Cofactor biosynthesis; pyridoxine 5'-phosphate biosynthesis; pyridoxine 5'-phosphate from D-erythrose 4-phosphate: step 4/5.</text>
</comment>
<comment type="subunit">
    <text evidence="1">Homodimer.</text>
</comment>
<comment type="subcellular location">
    <subcellularLocation>
        <location evidence="1">Cytoplasm</location>
    </subcellularLocation>
</comment>
<comment type="miscellaneous">
    <text evidence="1">The active site is located at the dimer interface.</text>
</comment>
<comment type="similarity">
    <text evidence="1">Belongs to the PdxA family.</text>
</comment>